<keyword id="KW-0170">Cobalt</keyword>
<keyword id="KW-0479">Metal-binding</keyword>
<keyword id="KW-0484">Methanogenesis</keyword>
<keyword id="KW-0677">Repeat</keyword>
<gene>
    <name type="primary">mtmC2</name>
    <name type="ordered locus">MM_3334</name>
</gene>
<dbReference type="EMBL" id="AE008384">
    <property type="protein sequence ID" value="AAM33030.1"/>
    <property type="molecule type" value="Genomic_DNA"/>
</dbReference>
<dbReference type="RefSeq" id="WP_011035223.1">
    <property type="nucleotide sequence ID" value="NC_003901.1"/>
</dbReference>
<dbReference type="SMR" id="P58978"/>
<dbReference type="KEGG" id="mma:MM_3334"/>
<dbReference type="PATRIC" id="fig|192952.21.peg.3876"/>
<dbReference type="eggNOG" id="arCOG02031">
    <property type="taxonomic scope" value="Archaea"/>
</dbReference>
<dbReference type="HOGENOM" id="CLU_082102_1_0_2"/>
<dbReference type="UniPathway" id="UPA00643"/>
<dbReference type="Proteomes" id="UP000000595">
    <property type="component" value="Chromosome"/>
</dbReference>
<dbReference type="GO" id="GO:0005829">
    <property type="term" value="C:cytosol"/>
    <property type="evidence" value="ECO:0007669"/>
    <property type="project" value="TreeGrafter"/>
</dbReference>
<dbReference type="GO" id="GO:0031419">
    <property type="term" value="F:cobalamin binding"/>
    <property type="evidence" value="ECO:0007669"/>
    <property type="project" value="InterPro"/>
</dbReference>
<dbReference type="GO" id="GO:0050897">
    <property type="term" value="F:cobalt ion binding"/>
    <property type="evidence" value="ECO:0007669"/>
    <property type="project" value="InterPro"/>
</dbReference>
<dbReference type="GO" id="GO:0008705">
    <property type="term" value="F:methionine synthase activity"/>
    <property type="evidence" value="ECO:0007669"/>
    <property type="project" value="TreeGrafter"/>
</dbReference>
<dbReference type="GO" id="GO:0050667">
    <property type="term" value="P:homocysteine metabolic process"/>
    <property type="evidence" value="ECO:0007669"/>
    <property type="project" value="TreeGrafter"/>
</dbReference>
<dbReference type="GO" id="GO:0015948">
    <property type="term" value="P:methanogenesis"/>
    <property type="evidence" value="ECO:0007669"/>
    <property type="project" value="UniProtKB-KW"/>
</dbReference>
<dbReference type="GO" id="GO:0046653">
    <property type="term" value="P:tetrahydrofolate metabolic process"/>
    <property type="evidence" value="ECO:0007669"/>
    <property type="project" value="TreeGrafter"/>
</dbReference>
<dbReference type="CDD" id="cd02070">
    <property type="entry name" value="corrinoid_protein_B12-BD"/>
    <property type="match status" value="1"/>
</dbReference>
<dbReference type="FunFam" id="3.40.50.280:FF:000007">
    <property type="entry name" value="Monomethylamine corrinoid protein 1"/>
    <property type="match status" value="1"/>
</dbReference>
<dbReference type="FunFam" id="1.10.1240.10:FF:000004">
    <property type="entry name" value="Monomethylamine methyltransferase corrinoid protein"/>
    <property type="match status" value="1"/>
</dbReference>
<dbReference type="Gene3D" id="3.40.50.280">
    <property type="entry name" value="Cobalamin-binding domain"/>
    <property type="match status" value="1"/>
</dbReference>
<dbReference type="Gene3D" id="1.10.1240.10">
    <property type="entry name" value="Methionine synthase domain"/>
    <property type="match status" value="1"/>
</dbReference>
<dbReference type="InterPro" id="IPR003759">
    <property type="entry name" value="Cbl-bd_cap"/>
</dbReference>
<dbReference type="InterPro" id="IPR006158">
    <property type="entry name" value="Cobalamin-bd"/>
</dbReference>
<dbReference type="InterPro" id="IPR036724">
    <property type="entry name" value="Cobalamin-bd_sf"/>
</dbReference>
<dbReference type="InterPro" id="IPR012741">
    <property type="entry name" value="Corrinoid_p"/>
</dbReference>
<dbReference type="InterPro" id="IPR050554">
    <property type="entry name" value="Met_Synthase/Corrinoid"/>
</dbReference>
<dbReference type="InterPro" id="IPR036594">
    <property type="entry name" value="Meth_synthase_dom"/>
</dbReference>
<dbReference type="NCBIfam" id="TIGR02370">
    <property type="entry name" value="pyl_corrinoid"/>
    <property type="match status" value="1"/>
</dbReference>
<dbReference type="PANTHER" id="PTHR45833">
    <property type="entry name" value="METHIONINE SYNTHASE"/>
    <property type="match status" value="1"/>
</dbReference>
<dbReference type="PANTHER" id="PTHR45833:SF1">
    <property type="entry name" value="METHIONINE SYNTHASE"/>
    <property type="match status" value="1"/>
</dbReference>
<dbReference type="Pfam" id="PF02310">
    <property type="entry name" value="B12-binding"/>
    <property type="match status" value="1"/>
</dbReference>
<dbReference type="Pfam" id="PF02607">
    <property type="entry name" value="B12-binding_2"/>
    <property type="match status" value="1"/>
</dbReference>
<dbReference type="SMART" id="SM01018">
    <property type="entry name" value="B12-binding_2"/>
    <property type="match status" value="1"/>
</dbReference>
<dbReference type="SUPFAM" id="SSF52242">
    <property type="entry name" value="Cobalamin (vitamin B12)-binding domain"/>
    <property type="match status" value="1"/>
</dbReference>
<dbReference type="SUPFAM" id="SSF47644">
    <property type="entry name" value="Methionine synthase domain"/>
    <property type="match status" value="1"/>
</dbReference>
<dbReference type="PROSITE" id="PS51332">
    <property type="entry name" value="B12_BINDING"/>
    <property type="match status" value="1"/>
</dbReference>
<dbReference type="PROSITE" id="PS51337">
    <property type="entry name" value="B12_BINDING_NTER"/>
    <property type="match status" value="1"/>
</dbReference>
<name>MTMC2_METMA</name>
<comment type="function">
    <text evidence="1">Acts as a methyl group carrier between MtmB and MtbA.</text>
</comment>
<comment type="pathway">
    <text>One-carbon metabolism; methanogenesis from methylamine.</text>
</comment>
<comment type="subunit">
    <text evidence="1">Can form a complex with MtmB.</text>
</comment>
<comment type="similarity">
    <text evidence="4">Belongs to the methylamine corrinoid protein family.</text>
</comment>
<evidence type="ECO:0000250" key="1"/>
<evidence type="ECO:0000255" key="2">
    <source>
        <dbReference type="PROSITE-ProRule" id="PRU00666"/>
    </source>
</evidence>
<evidence type="ECO:0000255" key="3">
    <source>
        <dbReference type="PROSITE-ProRule" id="PRU00667"/>
    </source>
</evidence>
<evidence type="ECO:0000305" key="4"/>
<proteinExistence type="inferred from homology"/>
<feature type="chain" id="PRO_0000216472" description="Monomethylamine corrinoid protein 2">
    <location>
        <begin position="1"/>
        <end position="218"/>
    </location>
</feature>
<feature type="domain" description="B12-binding N-terminal" evidence="3">
    <location>
        <begin position="1"/>
        <end position="91"/>
    </location>
</feature>
<feature type="domain" description="B12-binding" evidence="2">
    <location>
        <begin position="94"/>
        <end position="218"/>
    </location>
</feature>
<feature type="binding site" description="axial binding residue" evidence="1">
    <location>
        <position position="107"/>
    </location>
    <ligand>
        <name>methylcob(III)alamin</name>
        <dbReference type="ChEBI" id="CHEBI:28115"/>
    </ligand>
    <ligandPart>
        <name>Co</name>
        <dbReference type="ChEBI" id="CHEBI:27638"/>
    </ligandPart>
</feature>
<sequence>MTNTEIFNKLTNAIVTQDIAGCAKLTQEALDAGISPLDIITKGLSPGMKIIGDKFEAAEIFLPQIMMSGKAMSSAMEILTPELEKTKVEGEEGTGLAITFVAEGDIHDIGHRLVTTMLGANGFDILDLGVDVLNETVIEEAAKRKGQKIILVGSALMTTSMLGQKDLMDRLREENLRDSVKCMFGGAPVSDKWIDEIGADATAENAAEAAKVALNVMK</sequence>
<protein>
    <recommendedName>
        <fullName>Monomethylamine corrinoid protein 2</fullName>
        <shortName>MMCP 2</shortName>
    </recommendedName>
</protein>
<reference key="1">
    <citation type="journal article" date="2002" name="J. Mol. Microbiol. Biotechnol.">
        <title>The genome of Methanosarcina mazei: evidence for lateral gene transfer between Bacteria and Archaea.</title>
        <authorList>
            <person name="Deppenmeier U."/>
            <person name="Johann A."/>
            <person name="Hartsch T."/>
            <person name="Merkl R."/>
            <person name="Schmitz R.A."/>
            <person name="Martinez-Arias R."/>
            <person name="Henne A."/>
            <person name="Wiezer A."/>
            <person name="Baeumer S."/>
            <person name="Jacobi C."/>
            <person name="Brueggemann H."/>
            <person name="Lienard T."/>
            <person name="Christmann A."/>
            <person name="Boemecke M."/>
            <person name="Steckel S."/>
            <person name="Bhattacharyya A."/>
            <person name="Lykidis A."/>
            <person name="Overbeek R."/>
            <person name="Klenk H.-P."/>
            <person name="Gunsalus R.P."/>
            <person name="Fritz H.-J."/>
            <person name="Gottschalk G."/>
        </authorList>
    </citation>
    <scope>NUCLEOTIDE SEQUENCE [LARGE SCALE GENOMIC DNA]</scope>
    <source>
        <strain>ATCC BAA-159 / DSM 3647 / Goe1 / Go1 / JCM 11833 / OCM 88</strain>
    </source>
</reference>
<organism>
    <name type="scientific">Methanosarcina mazei (strain ATCC BAA-159 / DSM 3647 / Goe1 / Go1 / JCM 11833 / OCM 88)</name>
    <name type="common">Methanosarcina frisia</name>
    <dbReference type="NCBI Taxonomy" id="192952"/>
    <lineage>
        <taxon>Archaea</taxon>
        <taxon>Methanobacteriati</taxon>
        <taxon>Methanobacteriota</taxon>
        <taxon>Stenosarchaea group</taxon>
        <taxon>Methanomicrobia</taxon>
        <taxon>Methanosarcinales</taxon>
        <taxon>Methanosarcinaceae</taxon>
        <taxon>Methanosarcina</taxon>
    </lineage>
</organism>
<accession>P58978</accession>